<dbReference type="EMBL" id="X96983">
    <property type="protein sequence ID" value="CAA65688.1"/>
    <property type="molecule type" value="Genomic_DNA"/>
</dbReference>
<dbReference type="EMBL" id="AL009126">
    <property type="protein sequence ID" value="CAB12733.1"/>
    <property type="molecule type" value="Genomic_DNA"/>
</dbReference>
<dbReference type="PIR" id="A69822">
    <property type="entry name" value="A69822"/>
</dbReference>
<dbReference type="RefSeq" id="NP_388786.1">
    <property type="nucleotide sequence ID" value="NC_000964.3"/>
</dbReference>
<dbReference type="RefSeq" id="WP_003245465.1">
    <property type="nucleotide sequence ID" value="NZ_OZ025638.1"/>
</dbReference>
<dbReference type="SMR" id="P54589"/>
<dbReference type="FunCoup" id="P54589">
    <property type="interactions" value="353"/>
</dbReference>
<dbReference type="STRING" id="224308.BSU09050"/>
<dbReference type="PaxDb" id="224308-BSU09050"/>
<dbReference type="EnsemblBacteria" id="CAB12733">
    <property type="protein sequence ID" value="CAB12733"/>
    <property type="gene ID" value="BSU_09050"/>
</dbReference>
<dbReference type="GeneID" id="939256"/>
<dbReference type="KEGG" id="bsu:BSU09050"/>
<dbReference type="PATRIC" id="fig|224308.179.peg.978"/>
<dbReference type="InParanoid" id="P54589"/>
<dbReference type="OrthoDB" id="2962380at2"/>
<dbReference type="BioCyc" id="BSUB:BSU09050-MONOMER"/>
<dbReference type="Proteomes" id="UP000001570">
    <property type="component" value="Chromosome"/>
</dbReference>
<dbReference type="GO" id="GO:0005886">
    <property type="term" value="C:plasma membrane"/>
    <property type="evidence" value="ECO:0007669"/>
    <property type="project" value="UniProtKB-SubCell"/>
</dbReference>
<gene>
    <name type="primary">yhcE</name>
    <name type="ordered locus">BSU09050</name>
</gene>
<organism>
    <name type="scientific">Bacillus subtilis (strain 168)</name>
    <dbReference type="NCBI Taxonomy" id="224308"/>
    <lineage>
        <taxon>Bacteria</taxon>
        <taxon>Bacillati</taxon>
        <taxon>Bacillota</taxon>
        <taxon>Bacilli</taxon>
        <taxon>Bacillales</taxon>
        <taxon>Bacillaceae</taxon>
        <taxon>Bacillus</taxon>
    </lineage>
</organism>
<proteinExistence type="predicted"/>
<comment type="subcellular location">
    <subcellularLocation>
        <location evidence="2">Cell membrane</location>
        <topology evidence="2">Multi-pass membrane protein</topology>
    </subcellularLocation>
</comment>
<keyword id="KW-1003">Cell membrane</keyword>
<keyword id="KW-0472">Membrane</keyword>
<keyword id="KW-1185">Reference proteome</keyword>
<keyword id="KW-0812">Transmembrane</keyword>
<keyword id="KW-1133">Transmembrane helix</keyword>
<evidence type="ECO:0000255" key="1"/>
<evidence type="ECO:0000305" key="2"/>
<name>YHCE_BACSU</name>
<protein>
    <recommendedName>
        <fullName>Uncharacterized protein YhcE</fullName>
    </recommendedName>
</protein>
<reference key="1">
    <citation type="journal article" date="1996" name="Microbiology">
        <title>A 22 kb DNA sequence in the cspB-glpPFKD region at 75 degrees on the Bacillus subtilis chromosome.</title>
        <authorList>
            <person name="Noback M.A."/>
            <person name="Terpstra P."/>
            <person name="Holsappel S."/>
            <person name="Venema G."/>
            <person name="Bron S."/>
        </authorList>
    </citation>
    <scope>NUCLEOTIDE SEQUENCE [GENOMIC DNA]</scope>
    <source>
        <strain>168</strain>
    </source>
</reference>
<reference key="2">
    <citation type="journal article" date="1997" name="Nature">
        <title>The complete genome sequence of the Gram-positive bacterium Bacillus subtilis.</title>
        <authorList>
            <person name="Kunst F."/>
            <person name="Ogasawara N."/>
            <person name="Moszer I."/>
            <person name="Albertini A.M."/>
            <person name="Alloni G."/>
            <person name="Azevedo V."/>
            <person name="Bertero M.G."/>
            <person name="Bessieres P."/>
            <person name="Bolotin A."/>
            <person name="Borchert S."/>
            <person name="Borriss R."/>
            <person name="Boursier L."/>
            <person name="Brans A."/>
            <person name="Braun M."/>
            <person name="Brignell S.C."/>
            <person name="Bron S."/>
            <person name="Brouillet S."/>
            <person name="Bruschi C.V."/>
            <person name="Caldwell B."/>
            <person name="Capuano V."/>
            <person name="Carter N.M."/>
            <person name="Choi S.-K."/>
            <person name="Codani J.-J."/>
            <person name="Connerton I.F."/>
            <person name="Cummings N.J."/>
            <person name="Daniel R.A."/>
            <person name="Denizot F."/>
            <person name="Devine K.M."/>
            <person name="Duesterhoeft A."/>
            <person name="Ehrlich S.D."/>
            <person name="Emmerson P.T."/>
            <person name="Entian K.-D."/>
            <person name="Errington J."/>
            <person name="Fabret C."/>
            <person name="Ferrari E."/>
            <person name="Foulger D."/>
            <person name="Fritz C."/>
            <person name="Fujita M."/>
            <person name="Fujita Y."/>
            <person name="Fuma S."/>
            <person name="Galizzi A."/>
            <person name="Galleron N."/>
            <person name="Ghim S.-Y."/>
            <person name="Glaser P."/>
            <person name="Goffeau A."/>
            <person name="Golightly E.J."/>
            <person name="Grandi G."/>
            <person name="Guiseppi G."/>
            <person name="Guy B.J."/>
            <person name="Haga K."/>
            <person name="Haiech J."/>
            <person name="Harwood C.R."/>
            <person name="Henaut A."/>
            <person name="Hilbert H."/>
            <person name="Holsappel S."/>
            <person name="Hosono S."/>
            <person name="Hullo M.-F."/>
            <person name="Itaya M."/>
            <person name="Jones L.-M."/>
            <person name="Joris B."/>
            <person name="Karamata D."/>
            <person name="Kasahara Y."/>
            <person name="Klaerr-Blanchard M."/>
            <person name="Klein C."/>
            <person name="Kobayashi Y."/>
            <person name="Koetter P."/>
            <person name="Koningstein G."/>
            <person name="Krogh S."/>
            <person name="Kumano M."/>
            <person name="Kurita K."/>
            <person name="Lapidus A."/>
            <person name="Lardinois S."/>
            <person name="Lauber J."/>
            <person name="Lazarevic V."/>
            <person name="Lee S.-M."/>
            <person name="Levine A."/>
            <person name="Liu H."/>
            <person name="Masuda S."/>
            <person name="Mauel C."/>
            <person name="Medigue C."/>
            <person name="Medina N."/>
            <person name="Mellado R.P."/>
            <person name="Mizuno M."/>
            <person name="Moestl D."/>
            <person name="Nakai S."/>
            <person name="Noback M."/>
            <person name="Noone D."/>
            <person name="O'Reilly M."/>
            <person name="Ogawa K."/>
            <person name="Ogiwara A."/>
            <person name="Oudega B."/>
            <person name="Park S.-H."/>
            <person name="Parro V."/>
            <person name="Pohl T.M."/>
            <person name="Portetelle D."/>
            <person name="Porwollik S."/>
            <person name="Prescott A.M."/>
            <person name="Presecan E."/>
            <person name="Pujic P."/>
            <person name="Purnelle B."/>
            <person name="Rapoport G."/>
            <person name="Rey M."/>
            <person name="Reynolds S."/>
            <person name="Rieger M."/>
            <person name="Rivolta C."/>
            <person name="Rocha E."/>
            <person name="Roche B."/>
            <person name="Rose M."/>
            <person name="Sadaie Y."/>
            <person name="Sato T."/>
            <person name="Scanlan E."/>
            <person name="Schleich S."/>
            <person name="Schroeter R."/>
            <person name="Scoffone F."/>
            <person name="Sekiguchi J."/>
            <person name="Sekowska A."/>
            <person name="Seror S.J."/>
            <person name="Serror P."/>
            <person name="Shin B.-S."/>
            <person name="Soldo B."/>
            <person name="Sorokin A."/>
            <person name="Tacconi E."/>
            <person name="Takagi T."/>
            <person name="Takahashi H."/>
            <person name="Takemaru K."/>
            <person name="Takeuchi M."/>
            <person name="Tamakoshi A."/>
            <person name="Tanaka T."/>
            <person name="Terpstra P."/>
            <person name="Tognoni A."/>
            <person name="Tosato V."/>
            <person name="Uchiyama S."/>
            <person name="Vandenbol M."/>
            <person name="Vannier F."/>
            <person name="Vassarotti A."/>
            <person name="Viari A."/>
            <person name="Wambutt R."/>
            <person name="Wedler E."/>
            <person name="Wedler H."/>
            <person name="Weitzenegger T."/>
            <person name="Winters P."/>
            <person name="Wipat A."/>
            <person name="Yamamoto H."/>
            <person name="Yamane K."/>
            <person name="Yasumoto K."/>
            <person name="Yata K."/>
            <person name="Yoshida K."/>
            <person name="Yoshikawa H.-F."/>
            <person name="Zumstein E."/>
            <person name="Yoshikawa H."/>
            <person name="Danchin A."/>
        </authorList>
    </citation>
    <scope>NUCLEOTIDE SEQUENCE [LARGE SCALE GENOMIC DNA]</scope>
    <source>
        <strain>168</strain>
    </source>
</reference>
<accession>P54589</accession>
<sequence length="253" mass="29458">MNSFLGLLKKDIKLSRMWLLVWICGIIFLLGTGHIIASRTKEPLVIFGFFVAVAFFLLFLSPVFVFYHLRKEGKSQLWLYNPNGGLWLFSSKLAASLLYQFVIQLALTAYGIWMYHMLSVKNLLEHQVDITSTVALLNMYGLISSLDMSVTVIVFWTVFHSLRNWRGMRWAAMVLLVAMWLFFDEYIISPLVESQKHFWPVTVYCNFDFHFHNVWRLELKPIHLSVLGFPIAIVITFLLLIMASKLLDRKVEV</sequence>
<feature type="chain" id="PRO_0000049559" description="Uncharacterized protein YhcE">
    <location>
        <begin position="1"/>
        <end position="253"/>
    </location>
</feature>
<feature type="transmembrane region" description="Helical" evidence="1">
    <location>
        <begin position="17"/>
        <end position="37"/>
    </location>
</feature>
<feature type="transmembrane region" description="Helical" evidence="1">
    <location>
        <begin position="46"/>
        <end position="66"/>
    </location>
</feature>
<feature type="transmembrane region" description="Helical" evidence="1">
    <location>
        <begin position="93"/>
        <end position="113"/>
    </location>
</feature>
<feature type="transmembrane region" description="Helical" evidence="1">
    <location>
        <begin position="139"/>
        <end position="159"/>
    </location>
</feature>
<feature type="transmembrane region" description="Helical" evidence="1">
    <location>
        <begin position="172"/>
        <end position="192"/>
    </location>
</feature>
<feature type="transmembrane region" description="Helical" evidence="1">
    <location>
        <begin position="222"/>
        <end position="242"/>
    </location>
</feature>